<proteinExistence type="inferred from homology"/>
<reference key="1">
    <citation type="journal article" date="2005" name="J. Bacteriol.">
        <title>Insights into genome plasticity and pathogenicity of the plant pathogenic Bacterium Xanthomonas campestris pv. vesicatoria revealed by the complete genome sequence.</title>
        <authorList>
            <person name="Thieme F."/>
            <person name="Koebnik R."/>
            <person name="Bekel T."/>
            <person name="Berger C."/>
            <person name="Boch J."/>
            <person name="Buettner D."/>
            <person name="Caldana C."/>
            <person name="Gaigalat L."/>
            <person name="Goesmann A."/>
            <person name="Kay S."/>
            <person name="Kirchner O."/>
            <person name="Lanz C."/>
            <person name="Linke B."/>
            <person name="McHardy A.C."/>
            <person name="Meyer F."/>
            <person name="Mittenhuber G."/>
            <person name="Nies D.H."/>
            <person name="Niesbach-Kloesgen U."/>
            <person name="Patschkowski T."/>
            <person name="Rueckert C."/>
            <person name="Rupp O."/>
            <person name="Schneiker S."/>
            <person name="Schuster S.C."/>
            <person name="Vorhoelter F.J."/>
            <person name="Weber E."/>
            <person name="Puehler A."/>
            <person name="Bonas U."/>
            <person name="Bartels D."/>
            <person name="Kaiser O."/>
        </authorList>
    </citation>
    <scope>NUCLEOTIDE SEQUENCE [LARGE SCALE GENOMIC DNA]</scope>
    <source>
        <strain>85-10</strain>
    </source>
</reference>
<comment type="function">
    <text evidence="1">Involved in unsaturated fatty acids biosynthesis. Catalyzes the dehydration of short chain beta-hydroxyacyl-ACPs and long chain saturated and unsaturated beta-hydroxyacyl-ACPs.</text>
</comment>
<comment type="catalytic activity">
    <reaction evidence="1">
        <text>a (3R)-hydroxyacyl-[ACP] = a (2E)-enoyl-[ACP] + H2O</text>
        <dbReference type="Rhea" id="RHEA:13097"/>
        <dbReference type="Rhea" id="RHEA-COMP:9925"/>
        <dbReference type="Rhea" id="RHEA-COMP:9945"/>
        <dbReference type="ChEBI" id="CHEBI:15377"/>
        <dbReference type="ChEBI" id="CHEBI:78784"/>
        <dbReference type="ChEBI" id="CHEBI:78827"/>
        <dbReference type="EC" id="4.2.1.59"/>
    </reaction>
</comment>
<comment type="subcellular location">
    <subcellularLocation>
        <location evidence="1">Cytoplasm</location>
    </subcellularLocation>
</comment>
<comment type="similarity">
    <text evidence="1">Belongs to the thioester dehydratase family. FabZ subfamily.</text>
</comment>
<keyword id="KW-0963">Cytoplasm</keyword>
<keyword id="KW-0441">Lipid A biosynthesis</keyword>
<keyword id="KW-0444">Lipid biosynthesis</keyword>
<keyword id="KW-0443">Lipid metabolism</keyword>
<keyword id="KW-0456">Lyase</keyword>
<name>FABZ_XANE5</name>
<dbReference type="EC" id="4.2.1.59" evidence="1"/>
<dbReference type="EMBL" id="AM039952">
    <property type="protein sequence ID" value="CAJ23098.1"/>
    <property type="molecule type" value="Genomic_DNA"/>
</dbReference>
<dbReference type="RefSeq" id="WP_003485378.1">
    <property type="nucleotide sequence ID" value="NZ_CP017190.1"/>
</dbReference>
<dbReference type="SMR" id="Q3BVL5"/>
<dbReference type="STRING" id="456327.BJD11_15310"/>
<dbReference type="GeneID" id="97509764"/>
<dbReference type="KEGG" id="xcv:XCV1467"/>
<dbReference type="eggNOG" id="COG0764">
    <property type="taxonomic scope" value="Bacteria"/>
</dbReference>
<dbReference type="HOGENOM" id="CLU_078912_1_0_6"/>
<dbReference type="Proteomes" id="UP000007069">
    <property type="component" value="Chromosome"/>
</dbReference>
<dbReference type="GO" id="GO:0005737">
    <property type="term" value="C:cytoplasm"/>
    <property type="evidence" value="ECO:0007669"/>
    <property type="project" value="UniProtKB-SubCell"/>
</dbReference>
<dbReference type="GO" id="GO:0016020">
    <property type="term" value="C:membrane"/>
    <property type="evidence" value="ECO:0007669"/>
    <property type="project" value="GOC"/>
</dbReference>
<dbReference type="GO" id="GO:0019171">
    <property type="term" value="F:(3R)-hydroxyacyl-[acyl-carrier-protein] dehydratase activity"/>
    <property type="evidence" value="ECO:0007669"/>
    <property type="project" value="UniProtKB-EC"/>
</dbReference>
<dbReference type="GO" id="GO:0006633">
    <property type="term" value="P:fatty acid biosynthetic process"/>
    <property type="evidence" value="ECO:0007669"/>
    <property type="project" value="UniProtKB-UniRule"/>
</dbReference>
<dbReference type="GO" id="GO:0009245">
    <property type="term" value="P:lipid A biosynthetic process"/>
    <property type="evidence" value="ECO:0007669"/>
    <property type="project" value="UniProtKB-UniRule"/>
</dbReference>
<dbReference type="CDD" id="cd01288">
    <property type="entry name" value="FabZ"/>
    <property type="match status" value="1"/>
</dbReference>
<dbReference type="FunFam" id="3.10.129.10:FF:000001">
    <property type="entry name" value="3-hydroxyacyl-[acyl-carrier-protein] dehydratase FabZ"/>
    <property type="match status" value="1"/>
</dbReference>
<dbReference type="Gene3D" id="3.10.129.10">
    <property type="entry name" value="Hotdog Thioesterase"/>
    <property type="match status" value="1"/>
</dbReference>
<dbReference type="HAMAP" id="MF_00406">
    <property type="entry name" value="FabZ"/>
    <property type="match status" value="1"/>
</dbReference>
<dbReference type="InterPro" id="IPR013114">
    <property type="entry name" value="FabA_FabZ"/>
</dbReference>
<dbReference type="InterPro" id="IPR010084">
    <property type="entry name" value="FabZ"/>
</dbReference>
<dbReference type="InterPro" id="IPR029069">
    <property type="entry name" value="HotDog_dom_sf"/>
</dbReference>
<dbReference type="NCBIfam" id="TIGR01750">
    <property type="entry name" value="fabZ"/>
    <property type="match status" value="1"/>
</dbReference>
<dbReference type="NCBIfam" id="NF000582">
    <property type="entry name" value="PRK00006.1"/>
    <property type="match status" value="1"/>
</dbReference>
<dbReference type="PANTHER" id="PTHR30272">
    <property type="entry name" value="3-HYDROXYACYL-[ACYL-CARRIER-PROTEIN] DEHYDRATASE"/>
    <property type="match status" value="1"/>
</dbReference>
<dbReference type="PANTHER" id="PTHR30272:SF1">
    <property type="entry name" value="3-HYDROXYACYL-[ACYL-CARRIER-PROTEIN] DEHYDRATASE"/>
    <property type="match status" value="1"/>
</dbReference>
<dbReference type="Pfam" id="PF07977">
    <property type="entry name" value="FabA"/>
    <property type="match status" value="1"/>
</dbReference>
<dbReference type="SUPFAM" id="SSF54637">
    <property type="entry name" value="Thioesterase/thiol ester dehydrase-isomerase"/>
    <property type="match status" value="1"/>
</dbReference>
<gene>
    <name evidence="1" type="primary">fabZ</name>
    <name type="ordered locus">XCV1467</name>
</gene>
<accession>Q3BVL5</accession>
<protein>
    <recommendedName>
        <fullName evidence="1">3-hydroxyacyl-[acyl-carrier-protein] dehydratase FabZ</fullName>
        <ecNumber evidence="1">4.2.1.59</ecNumber>
    </recommendedName>
    <alternativeName>
        <fullName evidence="1">(3R)-hydroxymyristoyl-[acyl-carrier-protein] dehydratase</fullName>
        <shortName evidence="1">(3R)-hydroxymyristoyl-ACP dehydrase</shortName>
    </alternativeName>
    <alternativeName>
        <fullName evidence="1">Beta-hydroxyacyl-ACP dehydratase</fullName>
    </alternativeName>
</protein>
<organism>
    <name type="scientific">Xanthomonas euvesicatoria pv. vesicatoria (strain 85-10)</name>
    <name type="common">Xanthomonas campestris pv. vesicatoria</name>
    <dbReference type="NCBI Taxonomy" id="316273"/>
    <lineage>
        <taxon>Bacteria</taxon>
        <taxon>Pseudomonadati</taxon>
        <taxon>Pseudomonadota</taxon>
        <taxon>Gammaproteobacteria</taxon>
        <taxon>Lysobacterales</taxon>
        <taxon>Lysobacteraceae</taxon>
        <taxon>Xanthomonas</taxon>
    </lineage>
</organism>
<sequence>MSHHVYELPIDVSQIQTLLPHRYPFLLVDRILELDLETKWIVAQKNVSINEPFFQGHFPNRPVMPGVLIIEALAQVGGVMTQLGLGRDALSQLFYMVKVDKARFNKQVVPGDVLIMEVQMKRLIRNVGCFYGEAKVDGEVVASAEVMCAGAR</sequence>
<feature type="chain" id="PRO_0000230850" description="3-hydroxyacyl-[acyl-carrier-protein] dehydratase FabZ">
    <location>
        <begin position="1"/>
        <end position="152"/>
    </location>
</feature>
<feature type="active site" evidence="1">
    <location>
        <position position="57"/>
    </location>
</feature>
<evidence type="ECO:0000255" key="1">
    <source>
        <dbReference type="HAMAP-Rule" id="MF_00406"/>
    </source>
</evidence>